<name>PUR2_DROPS</name>
<reference key="1">
    <citation type="journal article" date="1987" name="Genetics">
        <title>Conserved arrangement of nested genes at the Drosophila Gart locus.</title>
        <authorList>
            <person name="Henikoff S."/>
            <person name="Eghtedarzadeh M.K."/>
        </authorList>
    </citation>
    <scope>NUCLEOTIDE SEQUENCE [GENOMIC DNA]</scope>
    <scope>ALTERNATIVE SPLICING</scope>
    <source>
        <strain>EST10</strain>
    </source>
</reference>
<reference key="2">
    <citation type="journal article" date="2005" name="Genome Res.">
        <title>Comparative genome sequencing of Drosophila pseudoobscura: chromosomal, gene, and cis-element evolution.</title>
        <authorList>
            <person name="Richards S."/>
            <person name="Liu Y."/>
            <person name="Bettencourt B.R."/>
            <person name="Hradecky P."/>
            <person name="Letovsky S."/>
            <person name="Nielsen R."/>
            <person name="Thornton K."/>
            <person name="Hubisz M.J."/>
            <person name="Chen R."/>
            <person name="Meisel R.P."/>
            <person name="Couronne O."/>
            <person name="Hua S."/>
            <person name="Smith M.A."/>
            <person name="Zhang P."/>
            <person name="Liu J."/>
            <person name="Bussemaker H.J."/>
            <person name="van Batenburg M.F."/>
            <person name="Howells S.L."/>
            <person name="Scherer S.E."/>
            <person name="Sodergren E."/>
            <person name="Matthews B.B."/>
            <person name="Crosby M.A."/>
            <person name="Schroeder A.J."/>
            <person name="Ortiz-Barrientos D."/>
            <person name="Rives C.M."/>
            <person name="Metzker M.L."/>
            <person name="Muzny D.M."/>
            <person name="Scott G."/>
            <person name="Steffen D."/>
            <person name="Wheeler D.A."/>
            <person name="Worley K.C."/>
            <person name="Havlak P."/>
            <person name="Durbin K.J."/>
            <person name="Egan A."/>
            <person name="Gill R."/>
            <person name="Hume J."/>
            <person name="Morgan M.B."/>
            <person name="Miner G."/>
            <person name="Hamilton C."/>
            <person name="Huang Y."/>
            <person name="Waldron L."/>
            <person name="Verduzco D."/>
            <person name="Clerc-Blankenburg K.P."/>
            <person name="Dubchak I."/>
            <person name="Noor M.A.F."/>
            <person name="Anderson W."/>
            <person name="White K.P."/>
            <person name="Clark A.G."/>
            <person name="Schaeffer S.W."/>
            <person name="Gelbart W.M."/>
            <person name="Weinstock G.M."/>
            <person name="Gibbs R.A."/>
        </authorList>
    </citation>
    <scope>NUCLEOTIDE SEQUENCE [LARGE SCALE GENOMIC DNA]</scope>
    <source>
        <strain>MV2-25 / Tucson 14011-0121.94</strain>
    </source>
</reference>
<reference key="3">
    <citation type="journal article" date="2005" name="Genetics">
        <title>Patterns of selection on synonymous and nonsynonymous variants in Drosophila miranda.</title>
        <authorList>
            <person name="Bartolome C."/>
            <person name="Maside X."/>
            <person name="Yi S."/>
            <person name="Grant A.L."/>
            <person name="Charlesworth B."/>
        </authorList>
    </citation>
    <scope>NUCLEOTIDE SEQUENCE [GENOMIC DNA] OF 107-565</scope>
</reference>
<comment type="function">
    <text evidence="2">Trifunctional enzyme required for de novo purine biosynthesis.</text>
</comment>
<comment type="catalytic activity">
    <reaction evidence="2">
        <text>5-phospho-beta-D-ribosylamine + glycine + ATP = N(1)-(5-phospho-beta-D-ribosyl)glycinamide + ADP + phosphate + H(+)</text>
        <dbReference type="Rhea" id="RHEA:17453"/>
        <dbReference type="ChEBI" id="CHEBI:15378"/>
        <dbReference type="ChEBI" id="CHEBI:30616"/>
        <dbReference type="ChEBI" id="CHEBI:43474"/>
        <dbReference type="ChEBI" id="CHEBI:57305"/>
        <dbReference type="ChEBI" id="CHEBI:58681"/>
        <dbReference type="ChEBI" id="CHEBI:143788"/>
        <dbReference type="ChEBI" id="CHEBI:456216"/>
        <dbReference type="EC" id="6.3.4.13"/>
    </reaction>
</comment>
<comment type="catalytic activity">
    <reaction evidence="2">
        <text>2-formamido-N(1)-(5-O-phospho-beta-D-ribosyl)acetamidine + ATP = 5-amino-1-(5-phospho-beta-D-ribosyl)imidazole + ADP + phosphate + H(+)</text>
        <dbReference type="Rhea" id="RHEA:23032"/>
        <dbReference type="ChEBI" id="CHEBI:15378"/>
        <dbReference type="ChEBI" id="CHEBI:30616"/>
        <dbReference type="ChEBI" id="CHEBI:43474"/>
        <dbReference type="ChEBI" id="CHEBI:137981"/>
        <dbReference type="ChEBI" id="CHEBI:147287"/>
        <dbReference type="ChEBI" id="CHEBI:456216"/>
        <dbReference type="EC" id="6.3.3.1"/>
    </reaction>
</comment>
<comment type="catalytic activity">
    <reaction evidence="2">
        <text>N(1)-(5-phospho-beta-D-ribosyl)glycinamide + (6R)-10-formyltetrahydrofolate = N(2)-formyl-N(1)-(5-phospho-beta-D-ribosyl)glycinamide + (6S)-5,6,7,8-tetrahydrofolate + H(+)</text>
        <dbReference type="Rhea" id="RHEA:15053"/>
        <dbReference type="ChEBI" id="CHEBI:15378"/>
        <dbReference type="ChEBI" id="CHEBI:57453"/>
        <dbReference type="ChEBI" id="CHEBI:143788"/>
        <dbReference type="ChEBI" id="CHEBI:147286"/>
        <dbReference type="ChEBI" id="CHEBI:195366"/>
        <dbReference type="EC" id="2.1.2.2"/>
    </reaction>
</comment>
<comment type="pathway">
    <text evidence="2">Purine metabolism; IMP biosynthesis via de novo pathway; 5-amino-1-(5-phospho-D-ribosyl)imidazole from N(2)-formyl-N(1)-(5-phospho-D-ribosyl)glycinamide: step 2/2.</text>
</comment>
<comment type="pathway">
    <text evidence="2">Purine metabolism; IMP biosynthesis via de novo pathway; N(1)-(5-phospho-D-ribosyl)glycinamide from 5-phospho-alpha-D-ribose 1-diphosphate: step 2/2.</text>
</comment>
<comment type="pathway">
    <text evidence="2">Purine metabolism; IMP biosynthesis via de novo pathway; N(2)-formyl-N(1)-(5-phospho-D-ribosyl)glycinamide from N(1)-(5-phospho-D-ribosyl)glycinamide (10-formyl THF route): step 1/1.</text>
</comment>
<comment type="alternative products">
    <event type="alternative splicing"/>
    <isoform>
        <id>P16340-1</id>
        <name>Long</name>
        <sequence type="displayed"/>
    </isoform>
    <isoform>
        <id>P16340-2</id>
        <name>Short</name>
        <sequence type="described" ref="VSP_005514 VSP_005515"/>
    </isoform>
</comment>
<comment type="similarity">
    <text evidence="3">In the N-terminal section; belongs to the GARS family.</text>
</comment>
<comment type="similarity">
    <text evidence="3">In the central section; belongs to the AIR synthase family.</text>
</comment>
<comment type="similarity">
    <text evidence="3">In the C-terminal section; belongs to the GART family.</text>
</comment>
<protein>
    <recommendedName>
        <fullName>Trifunctional purine biosynthetic protein adenosine-3</fullName>
    </recommendedName>
    <domain>
        <recommendedName>
            <fullName>Phosphoribosylamine--glycine ligase</fullName>
            <ecNumber evidence="2">6.3.4.13</ecNumber>
        </recommendedName>
        <alternativeName>
            <fullName>Glycinamide ribonucleotide synthetase</fullName>
            <shortName>GARS</shortName>
        </alternativeName>
        <alternativeName>
            <fullName>Phosphoribosylglycinamide synthetase</fullName>
        </alternativeName>
    </domain>
    <domain>
        <recommendedName>
            <fullName>Phosphoribosylformylglycinamidine cyclo-ligase</fullName>
            <ecNumber evidence="2">6.3.3.1</ecNumber>
        </recommendedName>
        <alternativeName>
            <fullName>AIR synthase</fullName>
            <shortName>AIRS</shortName>
        </alternativeName>
        <alternativeName>
            <fullName>Phosphoribosyl-aminoimidazole synthetase</fullName>
        </alternativeName>
    </domain>
    <domain>
        <recommendedName>
            <fullName>Phosphoribosylglycinamide formyltransferase</fullName>
            <ecNumber evidence="2">2.1.2.2</ecNumber>
        </recommendedName>
        <alternativeName>
            <fullName>5'-phosphoribosylglycinamide transformylase</fullName>
        </alternativeName>
        <alternativeName>
            <fullName>GAR transformylase</fullName>
            <shortName>GART</shortName>
        </alternativeName>
    </domain>
</protein>
<sequence length="1364" mass="145663">MSHSVLVIGSGGREHAICWKLSQSTLVKQIYALPGSFGIQQVEKCRNLDAKVLDPKDFEAIAKWSKKNEISLVVVGPEDPLALGLGDVLQKEGIPCFGPGKQGAQIEADKKWAKDFMLRHGIPTARYESFTDTNKAKAFIRSAPYQALVVKAAGLAAGKGVVVAANVDEACQAVDEILGDLKYGQAGATLVVEELLEGEEISVLAFTDGKSVRAMLPAQDHKRLGNGDTGPNTGGMGAYCPCPLISQPALELVQRAVLERAVQGLIKERITYQGVLYAGLMLTRDGPRVLEFNCRFGDPETQVILPLLETDLFEVMQACCSGQLDRLPLQWRSGVSAVGVVLASAGYPETSTKGCLITGLPDVNSPTQLIFHSGLSVNKQKEALTNGGRVLIAIALDASLKEAAAKATKLAGTITFAGTGAQYRTDIAQKAFKIAIATAPGLSYKDSGVDIDAGDALVQRIKPLSRGTQRPGVLGGLGGFGGLFRLKDLSYKEPVIAEATQGVGAKIQLALQNELYENIGYDLFAMSANDLLELGAEPVAFLDYIACGKLHVPLAAQLVKGMADGCRDAKCALVGGETAEMPSLYAPGQHDMAGYCVGIVEQARVLPRFDLYEPEDLLVGLPSSGLHCAGFNEILTQLAASKVNLKECSPVGGGKHGLSLAQVLGTPTRLYVQQLLPHLQAGNQIKAVAHVTHGLLHDVQRLLPEGFEVTLDFGAVPVPDVFGWLAGQLQLSAQTLLERHNCGIGMVLVLPQSSLLWRTALPGAKVLGVLNRQAKASGGAPRVKVRNFVEQLQKLAAPFGGLGETQLPEEVKDVPSSGVKATTREECFENAVGRRLTRVPNHYVDPILILGTDGVGTKLKIAQQTHRNASVGIDLVAMCVNDILCNGAEPFSFSSYYACGKWQAALAAEVNAGVQEGASQANSSFVASHSAALPLLYEPQVYDLAGFALGIAERSGILPRLDEIQPGDVLIGLPSSGVHSNGFSLVHAVLKRAGLGLNDRAPFSEKTLGEELLVPTKIYVKALSALLSRPNHGIKALAHITGGGLSENIPRVLRKELAVRLDANKYPLPPVFAWLAAAGNISSTELQRTYNCGLGLVLVVGATEVDGVLRELRYPQRASVVGEVVARKDPKKPQVVVQNFEASLARTQRMLSQPRKRVAVLISGKGSNLQALIDAIRDSAQGVYAEIVLVISNKAGVLGLERAAKAGIPSMVISHKDFPSREVYDVELTRHLKTARVEFICLAGFMRILSVPFVREWRGRLINIHPSLLPKFPGLHVQKQALEAGETESGCTVHYVDEGVDTGAIIVQAAVPILPGDDEETLTQRIHYAEHWAFPRALALLASGALRRVSEVKKEAPKDIKDSQ</sequence>
<gene>
    <name type="primary">ade3</name>
    <name type="synonym">gart</name>
    <name type="ORF">GA16345</name>
</gene>
<feature type="chain" id="PRO_0000074935" description="Trifunctional purine biosynthetic protein adenosine-3">
    <location>
        <begin position="1"/>
        <end position="1364"/>
    </location>
</feature>
<feature type="domain" description="ATP-grasp">
    <location>
        <begin position="114"/>
        <end position="321"/>
    </location>
</feature>
<feature type="region of interest" description="AIRS">
    <location>
        <begin position="435"/>
        <end position="1154"/>
    </location>
</feature>
<feature type="region of interest" description="GART">
    <location>
        <begin position="1155"/>
        <end position="1364"/>
    </location>
</feature>
<feature type="active site" description="Proton donor" evidence="1">
    <location>
        <position position="1265"/>
    </location>
</feature>
<feature type="binding site" evidence="1">
    <location>
        <begin position="140"/>
        <end position="202"/>
    </location>
    <ligand>
        <name>ATP</name>
        <dbReference type="ChEBI" id="CHEBI:30616"/>
    </ligand>
</feature>
<feature type="binding site" evidence="1">
    <location>
        <position position="291"/>
    </location>
    <ligand>
        <name>Mn(2+)</name>
        <dbReference type="ChEBI" id="CHEBI:29035"/>
    </ligand>
</feature>
<feature type="binding site" evidence="1">
    <location>
        <position position="293"/>
    </location>
    <ligand>
        <name>Mn(2+)</name>
        <dbReference type="ChEBI" id="CHEBI:29035"/>
    </ligand>
</feature>
<feature type="binding site" evidence="1">
    <location>
        <begin position="1166"/>
        <end position="1168"/>
    </location>
    <ligand>
        <name>N(1)-(5-phospho-beta-D-ribosyl)glycinamide</name>
        <dbReference type="ChEBI" id="CHEBI:143788"/>
    </ligand>
</feature>
<feature type="binding site" evidence="1">
    <location>
        <position position="1221"/>
    </location>
    <ligand>
        <name>(6R)-10-formyltetrahydrofolate</name>
        <dbReference type="ChEBI" id="CHEBI:195366"/>
    </ligand>
</feature>
<feature type="binding site" evidence="1">
    <location>
        <begin position="1246"/>
        <end position="1249"/>
    </location>
    <ligand>
        <name>(6R)-10-formyltetrahydrofolate</name>
        <dbReference type="ChEBI" id="CHEBI:195366"/>
    </ligand>
</feature>
<feature type="binding site" evidence="1">
    <location>
        <position position="1263"/>
    </location>
    <ligand>
        <name>(6R)-10-formyltetrahydrofolate</name>
        <dbReference type="ChEBI" id="CHEBI:195366"/>
    </ligand>
</feature>
<feature type="binding site" evidence="1">
    <location>
        <begin position="1297"/>
        <end position="1301"/>
    </location>
    <ligand>
        <name>(6R)-10-formyltetrahydrofolate</name>
        <dbReference type="ChEBI" id="CHEBI:195366"/>
    </ligand>
</feature>
<feature type="binding site" evidence="1">
    <location>
        <begin position="1327"/>
        <end position="1330"/>
    </location>
    <ligand>
        <name>N(1)-(5-phospho-beta-D-ribosyl)glycinamide</name>
        <dbReference type="ChEBI" id="CHEBI:143788"/>
    </ligand>
</feature>
<feature type="site" description="Raises pKa of active site His" evidence="1">
    <location>
        <position position="1301"/>
    </location>
</feature>
<feature type="splice variant" id="VSP_005514" description="In isoform Short." evidence="3">
    <original>I</original>
    <variation>M</variation>
    <location>
        <position position="434"/>
    </location>
</feature>
<feature type="splice variant" id="VSP_005515" description="In isoform Short." evidence="3">
    <location>
        <begin position="435"/>
        <end position="1364"/>
    </location>
</feature>
<feature type="sequence conflict" description="In Ref. 3; AAX12966." evidence="3" ref="3">
    <original>L</original>
    <variation>M</variation>
    <location>
        <position position="327"/>
    </location>
</feature>
<feature type="sequence conflict" description="In Ref. 3; AAX12966." evidence="3" ref="3">
    <original>T</original>
    <variation>M</variation>
    <location>
        <position position="425"/>
    </location>
</feature>
<feature type="sequence conflict" description="In Ref. 1; CAA29611." evidence="3" ref="1">
    <original>T</original>
    <variation>S</variation>
    <location>
        <position position="805"/>
    </location>
</feature>
<feature type="sequence conflict" description="In Ref. 1; CAA29611." evidence="3" ref="1">
    <original>G</original>
    <variation>A</variation>
    <location>
        <position position="956"/>
    </location>
</feature>
<feature type="sequence conflict" description="In Ref. 1; CAA29611." evidence="3" ref="1">
    <original>A</original>
    <variation>T</variation>
    <location>
        <position position="1145"/>
    </location>
</feature>
<dbReference type="EC" id="6.3.4.13" evidence="2"/>
<dbReference type="EC" id="6.3.3.1" evidence="2"/>
<dbReference type="EC" id="2.1.2.2" evidence="2"/>
<dbReference type="EMBL" id="X06285">
    <property type="protein sequence ID" value="CAA29611.1"/>
    <property type="molecule type" value="Genomic_DNA"/>
</dbReference>
<dbReference type="EMBL" id="CH379058">
    <property type="protein sequence ID" value="EAL34461.2"/>
    <property type="molecule type" value="Genomic_DNA"/>
</dbReference>
<dbReference type="EMBL" id="AY754390">
    <property type="protein sequence ID" value="AAX12966.1"/>
    <property type="molecule type" value="Genomic_DNA"/>
</dbReference>
<dbReference type="PIR" id="S01204">
    <property type="entry name" value="AJFFPP"/>
</dbReference>
<dbReference type="RefSeq" id="XP_001357392.2">
    <property type="nucleotide sequence ID" value="XM_001357356.3"/>
</dbReference>
<dbReference type="SMR" id="P16340"/>
<dbReference type="FunCoup" id="P16340">
    <property type="interactions" value="1861"/>
</dbReference>
<dbReference type="STRING" id="46245.P16340"/>
<dbReference type="EnsemblMetazoa" id="FBtr0280975">
    <molecule id="P16340-1"/>
    <property type="protein sequence ID" value="FBpp0279413"/>
    <property type="gene ID" value="FBgn0012717"/>
</dbReference>
<dbReference type="GeneID" id="4817813"/>
<dbReference type="KEGG" id="dpo:4817813"/>
<dbReference type="CTD" id="2618"/>
<dbReference type="eggNOG" id="KOG0237">
    <property type="taxonomic scope" value="Eukaryota"/>
</dbReference>
<dbReference type="eggNOG" id="KOG3076">
    <property type="taxonomic scope" value="Eukaryota"/>
</dbReference>
<dbReference type="HOGENOM" id="CLU_005361_0_1_1"/>
<dbReference type="InParanoid" id="P16340"/>
<dbReference type="OMA" id="EVMQACC"/>
<dbReference type="UniPathway" id="UPA00074">
    <property type="reaction ID" value="UER00125"/>
</dbReference>
<dbReference type="UniPathway" id="UPA00074">
    <property type="reaction ID" value="UER00126"/>
</dbReference>
<dbReference type="UniPathway" id="UPA00074">
    <property type="reaction ID" value="UER00129"/>
</dbReference>
<dbReference type="Proteomes" id="UP000001819">
    <property type="component" value="Chromosome 4"/>
</dbReference>
<dbReference type="Bgee" id="FBgn0012717">
    <property type="expression patterns" value="Expressed in female reproductive system and 2 other cell types or tissues"/>
</dbReference>
<dbReference type="ExpressionAtlas" id="P16340">
    <property type="expression patterns" value="baseline"/>
</dbReference>
<dbReference type="GO" id="GO:0005829">
    <property type="term" value="C:cytosol"/>
    <property type="evidence" value="ECO:0007669"/>
    <property type="project" value="TreeGrafter"/>
</dbReference>
<dbReference type="GO" id="GO:0005524">
    <property type="term" value="F:ATP binding"/>
    <property type="evidence" value="ECO:0007669"/>
    <property type="project" value="UniProtKB-KW"/>
</dbReference>
<dbReference type="GO" id="GO:0046872">
    <property type="term" value="F:metal ion binding"/>
    <property type="evidence" value="ECO:0007669"/>
    <property type="project" value="UniProtKB-KW"/>
</dbReference>
<dbReference type="GO" id="GO:0004637">
    <property type="term" value="F:phosphoribosylamine-glycine ligase activity"/>
    <property type="evidence" value="ECO:0007669"/>
    <property type="project" value="UniProtKB-EC"/>
</dbReference>
<dbReference type="GO" id="GO:0004641">
    <property type="term" value="F:phosphoribosylformylglycinamidine cyclo-ligase activity"/>
    <property type="evidence" value="ECO:0007669"/>
    <property type="project" value="UniProtKB-EC"/>
</dbReference>
<dbReference type="GO" id="GO:0004644">
    <property type="term" value="F:phosphoribosylglycinamide formyltransferase activity"/>
    <property type="evidence" value="ECO:0007669"/>
    <property type="project" value="UniProtKB-EC"/>
</dbReference>
<dbReference type="GO" id="GO:0006189">
    <property type="term" value="P:'de novo' IMP biosynthetic process"/>
    <property type="evidence" value="ECO:0007669"/>
    <property type="project" value="UniProtKB-UniPathway"/>
</dbReference>
<dbReference type="GO" id="GO:0046084">
    <property type="term" value="P:adenine biosynthetic process"/>
    <property type="evidence" value="ECO:0007669"/>
    <property type="project" value="TreeGrafter"/>
</dbReference>
<dbReference type="CDD" id="cd08645">
    <property type="entry name" value="FMT_core_GART"/>
    <property type="match status" value="1"/>
</dbReference>
<dbReference type="CDD" id="cd02196">
    <property type="entry name" value="PurM"/>
    <property type="match status" value="2"/>
</dbReference>
<dbReference type="FunFam" id="3.40.50.20:FF:000006">
    <property type="entry name" value="Phosphoribosylamine--glycine ligase, chloroplastic"/>
    <property type="match status" value="1"/>
</dbReference>
<dbReference type="FunFam" id="3.30.1490.20:FF:000006">
    <property type="entry name" value="phosphoribosylamine--glycine ligase, chloroplastic-like"/>
    <property type="match status" value="1"/>
</dbReference>
<dbReference type="FunFam" id="3.30.1330.10:FF:000001">
    <property type="entry name" value="Phosphoribosylformylglycinamidine cyclo-ligase"/>
    <property type="match status" value="1"/>
</dbReference>
<dbReference type="FunFam" id="3.30.1330.10:FF:000024">
    <property type="entry name" value="Trifunctional purine biosynthetic protein adenosine-3"/>
    <property type="match status" value="1"/>
</dbReference>
<dbReference type="FunFam" id="3.30.470.20:FF:000018">
    <property type="entry name" value="Trifunctional purine biosynthetic protein adenosine-3"/>
    <property type="match status" value="1"/>
</dbReference>
<dbReference type="FunFam" id="3.40.50.170:FF:000006">
    <property type="entry name" value="Trifunctional purine biosynthetic protein adenosine-3"/>
    <property type="match status" value="1"/>
</dbReference>
<dbReference type="FunFam" id="3.90.600.10:FF:000001">
    <property type="entry name" value="Trifunctional purine biosynthetic protein adenosine-3"/>
    <property type="match status" value="1"/>
</dbReference>
<dbReference type="FunFam" id="3.90.650.10:FF:000019">
    <property type="entry name" value="Trifunctional purine biosynthetic protein adenosine-3"/>
    <property type="match status" value="1"/>
</dbReference>
<dbReference type="Gene3D" id="3.40.50.20">
    <property type="match status" value="1"/>
</dbReference>
<dbReference type="Gene3D" id="3.30.1490.20">
    <property type="entry name" value="ATP-grasp fold, A domain"/>
    <property type="match status" value="1"/>
</dbReference>
<dbReference type="Gene3D" id="3.30.470.20">
    <property type="entry name" value="ATP-grasp fold, B domain"/>
    <property type="match status" value="1"/>
</dbReference>
<dbReference type="Gene3D" id="3.40.50.170">
    <property type="entry name" value="Formyl transferase, N-terminal domain"/>
    <property type="match status" value="1"/>
</dbReference>
<dbReference type="Gene3D" id="3.90.600.10">
    <property type="entry name" value="Phosphoribosylglycinamide synthetase, C-terminal domain"/>
    <property type="match status" value="1"/>
</dbReference>
<dbReference type="Gene3D" id="3.90.650.10">
    <property type="entry name" value="PurM-like C-terminal domain"/>
    <property type="match status" value="2"/>
</dbReference>
<dbReference type="Gene3D" id="3.30.1330.10">
    <property type="entry name" value="PurM-like, N-terminal domain"/>
    <property type="match status" value="2"/>
</dbReference>
<dbReference type="HAMAP" id="MF_00741">
    <property type="entry name" value="AIRS"/>
    <property type="match status" value="1"/>
</dbReference>
<dbReference type="HAMAP" id="MF_00138">
    <property type="entry name" value="GARS"/>
    <property type="match status" value="1"/>
</dbReference>
<dbReference type="HAMAP" id="MF_01930">
    <property type="entry name" value="PurN"/>
    <property type="match status" value="1"/>
</dbReference>
<dbReference type="InterPro" id="IPR011761">
    <property type="entry name" value="ATP-grasp"/>
</dbReference>
<dbReference type="InterPro" id="IPR013815">
    <property type="entry name" value="ATP_grasp_subdomain_1"/>
</dbReference>
<dbReference type="InterPro" id="IPR002376">
    <property type="entry name" value="Formyl_transf_N"/>
</dbReference>
<dbReference type="InterPro" id="IPR036477">
    <property type="entry name" value="Formyl_transf_N_sf"/>
</dbReference>
<dbReference type="InterPro" id="IPR004607">
    <property type="entry name" value="GART"/>
</dbReference>
<dbReference type="InterPro" id="IPR001555">
    <property type="entry name" value="GART_AS"/>
</dbReference>
<dbReference type="InterPro" id="IPR016185">
    <property type="entry name" value="PreATP-grasp_dom_sf"/>
</dbReference>
<dbReference type="InterPro" id="IPR020561">
    <property type="entry name" value="PRibGlycinamid_synth_ATP-grasp"/>
</dbReference>
<dbReference type="InterPro" id="IPR000115">
    <property type="entry name" value="PRibGlycinamide_synth"/>
</dbReference>
<dbReference type="InterPro" id="IPR020560">
    <property type="entry name" value="PRibGlycinamide_synth_C-dom"/>
</dbReference>
<dbReference type="InterPro" id="IPR037123">
    <property type="entry name" value="PRibGlycinamide_synth_C_sf"/>
</dbReference>
<dbReference type="InterPro" id="IPR020559">
    <property type="entry name" value="PRibGlycinamide_synth_CS"/>
</dbReference>
<dbReference type="InterPro" id="IPR020562">
    <property type="entry name" value="PRibGlycinamide_synth_N"/>
</dbReference>
<dbReference type="InterPro" id="IPR010918">
    <property type="entry name" value="PurM-like_C_dom"/>
</dbReference>
<dbReference type="InterPro" id="IPR036676">
    <property type="entry name" value="PurM-like_C_sf"/>
</dbReference>
<dbReference type="InterPro" id="IPR016188">
    <property type="entry name" value="PurM-like_N"/>
</dbReference>
<dbReference type="InterPro" id="IPR036921">
    <property type="entry name" value="PurM-like_N_sf"/>
</dbReference>
<dbReference type="InterPro" id="IPR004733">
    <property type="entry name" value="PurM_cligase"/>
</dbReference>
<dbReference type="InterPro" id="IPR011054">
    <property type="entry name" value="Rudment_hybrid_motif"/>
</dbReference>
<dbReference type="NCBIfam" id="TIGR00877">
    <property type="entry name" value="purD"/>
    <property type="match status" value="1"/>
</dbReference>
<dbReference type="NCBIfam" id="TIGR00878">
    <property type="entry name" value="purM"/>
    <property type="match status" value="2"/>
</dbReference>
<dbReference type="NCBIfam" id="TIGR00639">
    <property type="entry name" value="PurN"/>
    <property type="match status" value="1"/>
</dbReference>
<dbReference type="PANTHER" id="PTHR10520:SF12">
    <property type="entry name" value="TRIFUNCTIONAL PURINE BIOSYNTHETIC PROTEIN ADENOSINE-3"/>
    <property type="match status" value="1"/>
</dbReference>
<dbReference type="PANTHER" id="PTHR10520">
    <property type="entry name" value="TRIFUNCTIONAL PURINE BIOSYNTHETIC PROTEIN ADENOSINE-3-RELATED"/>
    <property type="match status" value="1"/>
</dbReference>
<dbReference type="Pfam" id="PF00586">
    <property type="entry name" value="AIRS"/>
    <property type="match status" value="2"/>
</dbReference>
<dbReference type="Pfam" id="PF02769">
    <property type="entry name" value="AIRS_C"/>
    <property type="match status" value="2"/>
</dbReference>
<dbReference type="Pfam" id="PF00551">
    <property type="entry name" value="Formyl_trans_N"/>
    <property type="match status" value="1"/>
</dbReference>
<dbReference type="Pfam" id="PF01071">
    <property type="entry name" value="GARS_A"/>
    <property type="match status" value="1"/>
</dbReference>
<dbReference type="Pfam" id="PF02843">
    <property type="entry name" value="GARS_C"/>
    <property type="match status" value="1"/>
</dbReference>
<dbReference type="Pfam" id="PF02844">
    <property type="entry name" value="GARS_N"/>
    <property type="match status" value="1"/>
</dbReference>
<dbReference type="SMART" id="SM01209">
    <property type="entry name" value="GARS_A"/>
    <property type="match status" value="1"/>
</dbReference>
<dbReference type="SMART" id="SM01210">
    <property type="entry name" value="GARS_C"/>
    <property type="match status" value="1"/>
</dbReference>
<dbReference type="SUPFAM" id="SSF53328">
    <property type="entry name" value="Formyltransferase"/>
    <property type="match status" value="1"/>
</dbReference>
<dbReference type="SUPFAM" id="SSF56059">
    <property type="entry name" value="Glutathione synthetase ATP-binding domain-like"/>
    <property type="match status" value="1"/>
</dbReference>
<dbReference type="SUPFAM" id="SSF52440">
    <property type="entry name" value="PreATP-grasp domain"/>
    <property type="match status" value="1"/>
</dbReference>
<dbReference type="SUPFAM" id="SSF56042">
    <property type="entry name" value="PurM C-terminal domain-like"/>
    <property type="match status" value="2"/>
</dbReference>
<dbReference type="SUPFAM" id="SSF55326">
    <property type="entry name" value="PurM N-terminal domain-like"/>
    <property type="match status" value="2"/>
</dbReference>
<dbReference type="SUPFAM" id="SSF51246">
    <property type="entry name" value="Rudiment single hybrid motif"/>
    <property type="match status" value="1"/>
</dbReference>
<dbReference type="PROSITE" id="PS50975">
    <property type="entry name" value="ATP_GRASP"/>
    <property type="match status" value="1"/>
</dbReference>
<dbReference type="PROSITE" id="PS00184">
    <property type="entry name" value="GARS"/>
    <property type="match status" value="1"/>
</dbReference>
<dbReference type="PROSITE" id="PS00373">
    <property type="entry name" value="GART"/>
    <property type="match status" value="1"/>
</dbReference>
<accession>P16340</accession>
<accession>Q29P31</accession>
<accession>Q56RW7</accession>
<evidence type="ECO:0000250" key="1"/>
<evidence type="ECO:0000250" key="2">
    <source>
        <dbReference type="UniProtKB" id="P00967"/>
    </source>
</evidence>
<evidence type="ECO:0000305" key="3"/>
<keyword id="KW-0025">Alternative splicing</keyword>
<keyword id="KW-0067">ATP-binding</keyword>
<keyword id="KW-0436">Ligase</keyword>
<keyword id="KW-0464">Manganese</keyword>
<keyword id="KW-0479">Metal-binding</keyword>
<keyword id="KW-0511">Multifunctional enzyme</keyword>
<keyword id="KW-0547">Nucleotide-binding</keyword>
<keyword id="KW-0658">Purine biosynthesis</keyword>
<keyword id="KW-1185">Reference proteome</keyword>
<keyword id="KW-0808">Transferase</keyword>
<organism>
    <name type="scientific">Drosophila pseudoobscura pseudoobscura</name>
    <name type="common">Fruit fly</name>
    <dbReference type="NCBI Taxonomy" id="46245"/>
    <lineage>
        <taxon>Eukaryota</taxon>
        <taxon>Metazoa</taxon>
        <taxon>Ecdysozoa</taxon>
        <taxon>Arthropoda</taxon>
        <taxon>Hexapoda</taxon>
        <taxon>Insecta</taxon>
        <taxon>Pterygota</taxon>
        <taxon>Neoptera</taxon>
        <taxon>Endopterygota</taxon>
        <taxon>Diptera</taxon>
        <taxon>Brachycera</taxon>
        <taxon>Muscomorpha</taxon>
        <taxon>Ephydroidea</taxon>
        <taxon>Drosophilidae</taxon>
        <taxon>Drosophila</taxon>
        <taxon>Sophophora</taxon>
    </lineage>
</organism>
<proteinExistence type="inferred from homology"/>